<organism>
    <name type="scientific">Streptococcus pneumoniae serotype 4 (strain ATCC BAA-334 / TIGR4)</name>
    <dbReference type="NCBI Taxonomy" id="170187"/>
    <lineage>
        <taxon>Bacteria</taxon>
        <taxon>Bacillati</taxon>
        <taxon>Bacillota</taxon>
        <taxon>Bacilli</taxon>
        <taxon>Lactobacillales</taxon>
        <taxon>Streptococcaceae</taxon>
        <taxon>Streptococcus</taxon>
    </lineage>
</organism>
<accession>Q97QS2</accession>
<gene>
    <name evidence="2 10" type="primary">eno</name>
    <name type="ordered locus">SP_1128</name>
</gene>
<reference key="1">
    <citation type="journal article" date="2001" name="Science">
        <title>Complete genome sequence of a virulent isolate of Streptococcus pneumoniae.</title>
        <authorList>
            <person name="Tettelin H."/>
            <person name="Nelson K.E."/>
            <person name="Paulsen I.T."/>
            <person name="Eisen J.A."/>
            <person name="Read T.D."/>
            <person name="Peterson S.N."/>
            <person name="Heidelberg J.F."/>
            <person name="DeBoy R.T."/>
            <person name="Haft D.H."/>
            <person name="Dodson R.J."/>
            <person name="Durkin A.S."/>
            <person name="Gwinn M.L."/>
            <person name="Kolonay J.F."/>
            <person name="Nelson W.C."/>
            <person name="Peterson J.D."/>
            <person name="Umayam L.A."/>
            <person name="White O."/>
            <person name="Salzberg S.L."/>
            <person name="Lewis M.R."/>
            <person name="Radune D."/>
            <person name="Holtzapple E.K."/>
            <person name="Khouri H.M."/>
            <person name="Wolf A.M."/>
            <person name="Utterback T.R."/>
            <person name="Hansen C.L."/>
            <person name="McDonald L.A."/>
            <person name="Feldblyum T.V."/>
            <person name="Angiuoli S.V."/>
            <person name="Dickinson T."/>
            <person name="Hickey E.K."/>
            <person name="Holt I.E."/>
            <person name="Loftus B.J."/>
            <person name="Yang F."/>
            <person name="Smith H.O."/>
            <person name="Venter J.C."/>
            <person name="Dougherty B.A."/>
            <person name="Morrison D.A."/>
            <person name="Hollingshead S.K."/>
            <person name="Fraser C.M."/>
        </authorList>
    </citation>
    <scope>NUCLEOTIDE SEQUENCE [LARGE SCALE GENOMIC DNA]</scope>
    <source>
        <strain>ATCC BAA-334 / TIGR4</strain>
    </source>
</reference>
<reference key="2">
    <citation type="journal article" date="2001" name="Mol. Microbiol.">
        <title>Alpha-enolase of Streptococcus pneumoniae is a plasmin(ogen)-binding protein displayed on the bacterial cell surface.</title>
        <authorList>
            <person name="Bergmann S."/>
            <person name="Rohde M."/>
            <person name="Chhatwal G.S."/>
            <person name="Hammerschmidt S."/>
        </authorList>
    </citation>
    <scope>PROTEIN SEQUENCE OF 1-20</scope>
    <scope>FUNCTION</scope>
    <scope>CATALYTIC ACTIVITY</scope>
    <scope>SUBCELLULAR LOCATION</scope>
    <scope>FUNCTION IN VIRULENCE</scope>
    <scope>BINDING TO PLASMINOGEN</scope>
    <scope>BIOPHYSICOCHEMICAL PROPERTIES</scope>
    <scope>DISRUPTION PHENOTYPE</scope>
    <scope>MUTAGENESIS OF 433-LYS-LYS-434 AND LYS-434</scope>
    <source>
        <strain>ATCC 11733 / Serotype 2</strain>
        <strain>R6x</strain>
    </source>
</reference>
<reference key="3">
    <citation type="journal article" date="2002" name="J. Med. Microbiol.">
        <title>Purification of native alpha-enolase from Streptococcus pneumoniae that binds plasminogen and is immunogenic.</title>
        <authorList>
            <person name="Whiting G.C."/>
            <person name="Evans J.T."/>
            <person name="Patel S."/>
            <person name="Gillespie S.H."/>
        </authorList>
    </citation>
    <scope>PROTEIN SEQUENCE OF 2-31</scope>
    <scope>FUNCTION</scope>
    <scope>CATALYTIC ACTIVITY</scope>
    <scope>SUBCELLULAR LOCATION</scope>
    <scope>BINDING TO PLASMINOGEN</scope>
    <scope>IMMUNOGENICITY</scope>
</reference>
<reference key="4">
    <citation type="journal article" date="2003" name="Mol. Microbiol.">
        <title>Identification of a novel plasmin(ogen)-binding motif in surface displayed alpha-enolase of Streptococcus pneumoniae.</title>
        <authorList>
            <person name="Bergmann S."/>
            <person name="Wild D."/>
            <person name="Diekmann O."/>
            <person name="Frank R."/>
            <person name="Bracht D."/>
            <person name="Chhatwal G.S."/>
            <person name="Hammerschmidt S."/>
        </authorList>
    </citation>
    <scope>PLASMINOGEN-BINDING MOTIF</scope>
    <scope>MUTAGENESIS OF ASP-250; 251-LYS--LYS-254; LYS-433 AND LYS-434</scope>
    <source>
        <strain>ATCC 11733 / Serotype 2</strain>
        <strain>D39 / Serotype 2</strain>
        <strain>R6x</strain>
    </source>
</reference>
<reference key="5">
    <citation type="journal article" date="2005" name="Thromb. Haemost.">
        <title>The nine residue plasminogen-binding motif of the pneumococcal enolase is the major cofactor of plasmin-mediated degradation of extracellular matrix, dissolution of fibrin and transmigration.</title>
        <authorList>
            <person name="Bergmann S."/>
            <person name="Rohde M."/>
            <person name="Preissner K.T."/>
            <person name="Hammerschmidt S."/>
        </authorList>
    </citation>
    <scope>FUNCTION OF PLASMINOGEN-BINDING MOTIF ON DEGRADATION OF EXTRACELLULAR MATRIX</scope>
    <source>
        <strain>D39 / Serotype 2</strain>
    </source>
</reference>
<reference key="6">
    <citation type="journal article" date="2006" name="Microbiology">
        <title>Streptococcus pneumoniae enolase is important for plasminogen binding despite low abundance of enolase protein on the bacterial cell surface.</title>
        <authorList>
            <person name="Kolberg J."/>
            <person name="Aase A."/>
            <person name="Bergmann S."/>
            <person name="Herstad T.K."/>
            <person name="Roedal G."/>
            <person name="Frank R."/>
            <person name="Rohde M."/>
            <person name="Hammerschmidt S."/>
        </authorList>
    </citation>
    <scope>EPITOPE MAPPING</scope>
    <scope>ANTIGENICITY</scope>
    <source>
        <strain>ATCC 11733 / Serotype 2</strain>
    </source>
</reference>
<reference key="7">
    <citation type="journal article" date="2013" name="Int. J. Med. Microbiol.">
        <title>The interaction between bacterial enolase and plasminogen promotes adherence of Streptococcus pneumoniae to epithelial and endothelial cells.</title>
        <authorList>
            <person name="Bergmann S."/>
            <person name="Schoenen H."/>
            <person name="Hammerschmidt S."/>
        </authorList>
    </citation>
    <scope>POSSIBLE FUNCTION IN HOST CELL-BINDING</scope>
    <scope>MUTAGENESIS OF 251-LYS--LYS-254</scope>
    <source>
        <strain>ATCC 11733 / Serotype 2</strain>
        <strain>NCTC 10319 / 35A</strain>
    </source>
</reference>
<reference key="8">
    <citation type="journal article" date="2004" name="J. Mol. Biol.">
        <title>Plasmin(ogen)-binding alpha-enolase from Streptococcus pneumoniae: crystal structure and evaluation of plasmin(ogen)-binding sites.</title>
        <authorList>
            <person name="Ehinger S."/>
            <person name="Schubert W.-D."/>
            <person name="Bergmann S."/>
            <person name="Hammerschmidt S."/>
            <person name="Heinz D.W."/>
        </authorList>
    </citation>
    <scope>X-RAY CRYSTALLOGRAPHY (2.1 ANGSTROMS) IN COMPLEX WITH MG(2+)</scope>
    <scope>SUBUNIT</scope>
    <scope>MUTAGENESIS OF LYS-433 AND LYS-434</scope>
    <source>
        <strain>ATCC 11733 / Serotype 2</strain>
    </source>
</reference>
<proteinExistence type="evidence at protein level"/>
<sequence>MSIITDVYAREVLDSRGNPTLEVEVYTESGAFGRGMVPSGASTGEHEAVELRDGDKSRYGGLGTQKAVDNVNNIIAEAIIGYDVRDQQAIDRAMIALDGTPNKGKLGANAILGVSIAVARAAADYLEIPLYSYLGGFNTKVLPTPMMNIINGGSHSDAPIAFQEFMILPVGAPTFKEALRYGAEIFHALKKILKSRGLETAVGDEGGFAPRFEGTEDGVETILAAIEAAGYVPGKDVFIGFDCASSEFYDKERKVYDYTKFEGEGAAVRTSAEQIDYLEELVNKYPIITIEDGMDENDWDGWKALTERLGKKVQLVGDDFFVTNTDYLARGIQEGAANSILIKVNQIGTLTETFEAIEMAKEAGYTAVVSHRSGETEDSTIADIAVATNAGQIKTGSLSRTDRIAKYNQLLRIEDQLGEVAEYRGLKSFYNLKK</sequence>
<keyword id="KW-0002">3D-structure</keyword>
<keyword id="KW-0130">Cell adhesion</keyword>
<keyword id="KW-0134">Cell wall</keyword>
<keyword id="KW-0963">Cytoplasm</keyword>
<keyword id="KW-0903">Direct protein sequencing</keyword>
<keyword id="KW-0324">Glycolysis</keyword>
<keyword id="KW-0456">Lyase</keyword>
<keyword id="KW-0460">Magnesium</keyword>
<keyword id="KW-0479">Metal-binding</keyword>
<keyword id="KW-1185">Reference proteome</keyword>
<keyword id="KW-0964">Secreted</keyword>
<keyword id="KW-0843">Virulence</keyword>
<name>ENO_STRPN</name>
<feature type="chain" id="PRO_0000133980" description="Enolase">
    <location>
        <begin position="1"/>
        <end position="434"/>
    </location>
</feature>
<feature type="region of interest" description="Antigenic epitope">
    <location>
        <begin position="55"/>
        <end position="63"/>
    </location>
</feature>
<feature type="short sequence motif" description="Plasminogen-binding peptide" evidence="5">
    <location>
        <begin position="248"/>
        <end position="256"/>
    </location>
</feature>
<feature type="active site" description="Proton donor" evidence="2">
    <location>
        <position position="205"/>
    </location>
</feature>
<feature type="active site" description="Proton acceptor" evidence="2">
    <location>
        <position position="343"/>
    </location>
</feature>
<feature type="binding site" evidence="2">
    <location>
        <position position="163"/>
    </location>
    <ligand>
        <name>(2R)-2-phosphoglycerate</name>
        <dbReference type="ChEBI" id="CHEBI:58289"/>
    </ligand>
</feature>
<feature type="binding site" evidence="2 6 13">
    <location>
        <position position="242"/>
    </location>
    <ligand>
        <name>Mg(2+)</name>
        <dbReference type="ChEBI" id="CHEBI:18420"/>
    </ligand>
</feature>
<feature type="binding site" evidence="2 6 13">
    <location>
        <position position="291"/>
    </location>
    <ligand>
        <name>Mg(2+)</name>
        <dbReference type="ChEBI" id="CHEBI:18420"/>
    </ligand>
</feature>
<feature type="binding site" evidence="2 6 13">
    <location>
        <position position="318"/>
    </location>
    <ligand>
        <name>Mg(2+)</name>
        <dbReference type="ChEBI" id="CHEBI:18420"/>
    </ligand>
</feature>
<feature type="binding site" evidence="2">
    <location>
        <position position="343"/>
    </location>
    <ligand>
        <name>(2R)-2-phosphoglycerate</name>
        <dbReference type="ChEBI" id="CHEBI:58289"/>
    </ligand>
</feature>
<feature type="binding site" evidence="2">
    <location>
        <position position="372"/>
    </location>
    <ligand>
        <name>(2R)-2-phosphoglycerate</name>
        <dbReference type="ChEBI" id="CHEBI:58289"/>
    </ligand>
</feature>
<feature type="binding site" evidence="2">
    <location>
        <position position="373"/>
    </location>
    <ligand>
        <name>(2R)-2-phosphoglycerate</name>
        <dbReference type="ChEBI" id="CHEBI:58289"/>
    </ligand>
</feature>
<feature type="binding site" evidence="2">
    <location>
        <position position="394"/>
    </location>
    <ligand>
        <name>(2R)-2-phosphoglycerate</name>
        <dbReference type="ChEBI" id="CHEBI:58289"/>
    </ligand>
</feature>
<feature type="mutagenesis site" description="Plasminogen-binding peptide inhibits plasminogen binding less well." evidence="5">
    <original>D</original>
    <variation>A</variation>
    <location>
        <position position="250"/>
    </location>
</feature>
<feature type="mutagenesis site" description="Plasminogen-binding peptide inhibits plasminogen binding less well. Decreased adherence to host cells in presence of plasminogen, decrease in virulence in mice." evidence="5 8">
    <original>KERK</original>
    <variation>LGRL</variation>
    <location>
        <begin position="251"/>
        <end position="254"/>
    </location>
</feature>
<feature type="mutagenesis site" description="Decrease in ability to bind plasminogen under denaturing conditions. No effect on ability to bind plasminogen under non-denaturing conditions. Loss of ability to form homooctamers." evidence="3 5 6">
    <original>KK</original>
    <variation>LL</variation>
    <location>
        <begin position="433"/>
        <end position="434"/>
    </location>
</feature>
<feature type="mutagenesis site" description="No effect on ability to bind plasminogen under non-denaturing conditions. Loss of ability to form homooctamers." evidence="5 6">
    <location>
        <begin position="433"/>
        <end position="434"/>
    </location>
</feature>
<feature type="mutagenesis site" description="Decrease in ability to bind plasminogen under denaturing conditions. No effect on ability to bind plasminogen under non-denaturing conditions. Loss of ability to form homooctamers." evidence="3 5 6">
    <original>K</original>
    <variation>L</variation>
    <location>
        <position position="434"/>
    </location>
</feature>
<feature type="sequence conflict" description="In Ref. 2; AA sequence." evidence="11" ref="2">
    <location>
        <position position="2"/>
    </location>
</feature>
<feature type="sequence conflict" description="In Ref. 2; AA sequence." evidence="11" ref="2">
    <original>T</original>
    <variation>P</variation>
    <location>
        <position position="20"/>
    </location>
</feature>
<feature type="sequence conflict" description="In Ref. 3; AA sequence." evidence="11" ref="3">
    <original>E</original>
    <variation>G</variation>
    <location>
        <position position="24"/>
    </location>
</feature>
<feature type="strand" evidence="14">
    <location>
        <begin position="3"/>
        <end position="13"/>
    </location>
</feature>
<feature type="strand" evidence="14">
    <location>
        <begin position="19"/>
        <end position="27"/>
    </location>
</feature>
<feature type="strand" evidence="14">
    <location>
        <begin position="32"/>
        <end position="36"/>
    </location>
</feature>
<feature type="helix" evidence="14">
    <location>
        <begin position="59"/>
        <end position="61"/>
    </location>
</feature>
<feature type="helix" evidence="14">
    <location>
        <begin position="65"/>
        <end position="73"/>
    </location>
</feature>
<feature type="helix" evidence="14">
    <location>
        <begin position="75"/>
        <end position="79"/>
    </location>
</feature>
<feature type="helix" evidence="14">
    <location>
        <begin position="87"/>
        <end position="98"/>
    </location>
</feature>
<feature type="turn" evidence="14">
    <location>
        <begin position="104"/>
        <end position="106"/>
    </location>
</feature>
<feature type="helix" evidence="14">
    <location>
        <begin position="108"/>
        <end position="126"/>
    </location>
</feature>
<feature type="helix" evidence="14">
    <location>
        <begin position="130"/>
        <end position="135"/>
    </location>
</feature>
<feature type="strand" evidence="14">
    <location>
        <begin position="147"/>
        <end position="151"/>
    </location>
</feature>
<feature type="helix" evidence="14">
    <location>
        <begin position="153"/>
        <end position="155"/>
    </location>
</feature>
<feature type="strand" evidence="14">
    <location>
        <begin position="157"/>
        <end position="159"/>
    </location>
</feature>
<feature type="strand" evidence="14">
    <location>
        <begin position="163"/>
        <end position="168"/>
    </location>
</feature>
<feature type="helix" evidence="14">
    <location>
        <begin position="175"/>
        <end position="195"/>
    </location>
</feature>
<feature type="helix" evidence="14">
    <location>
        <begin position="215"/>
        <end position="228"/>
    </location>
</feature>
<feature type="turn" evidence="14">
    <location>
        <begin position="233"/>
        <end position="235"/>
    </location>
</feature>
<feature type="strand" evidence="14">
    <location>
        <begin position="238"/>
        <end position="242"/>
    </location>
</feature>
<feature type="helix" evidence="14">
    <location>
        <begin position="245"/>
        <end position="248"/>
    </location>
</feature>
<feature type="helix" evidence="14">
    <location>
        <begin position="259"/>
        <end position="262"/>
    </location>
</feature>
<feature type="helix" evidence="14">
    <location>
        <begin position="271"/>
        <end position="284"/>
    </location>
</feature>
<feature type="strand" evidence="14">
    <location>
        <begin position="287"/>
        <end position="292"/>
    </location>
</feature>
<feature type="helix" evidence="14">
    <location>
        <begin position="299"/>
        <end position="309"/>
    </location>
</feature>
<feature type="turn" evidence="14">
    <location>
        <begin position="310"/>
        <end position="312"/>
    </location>
</feature>
<feature type="strand" evidence="14">
    <location>
        <begin position="313"/>
        <end position="318"/>
    </location>
</feature>
<feature type="turn" evidence="14">
    <location>
        <begin position="319"/>
        <end position="323"/>
    </location>
</feature>
<feature type="helix" evidence="14">
    <location>
        <begin position="325"/>
        <end position="334"/>
    </location>
</feature>
<feature type="strand" evidence="14">
    <location>
        <begin position="338"/>
        <end position="342"/>
    </location>
</feature>
<feature type="helix" evidence="14">
    <location>
        <begin position="344"/>
        <end position="347"/>
    </location>
</feature>
<feature type="helix" evidence="14">
    <location>
        <begin position="350"/>
        <end position="362"/>
    </location>
</feature>
<feature type="strand" evidence="14">
    <location>
        <begin position="366"/>
        <end position="370"/>
    </location>
</feature>
<feature type="helix" evidence="14">
    <location>
        <begin position="380"/>
        <end position="387"/>
    </location>
</feature>
<feature type="strand" evidence="14">
    <location>
        <begin position="392"/>
        <end position="394"/>
    </location>
</feature>
<feature type="strand" evidence="14">
    <location>
        <begin position="398"/>
        <end position="400"/>
    </location>
</feature>
<feature type="helix" evidence="14">
    <location>
        <begin position="401"/>
        <end position="417"/>
    </location>
</feature>
<feature type="helix" evidence="14">
    <location>
        <begin position="418"/>
        <end position="420"/>
    </location>
</feature>
<feature type="helix" evidence="14">
    <location>
        <begin position="425"/>
        <end position="428"/>
    </location>
</feature>
<protein>
    <recommendedName>
        <fullName evidence="2 10">Enolase</fullName>
        <ecNumber evidence="2 3 4">4.2.1.11</ecNumber>
    </recommendedName>
    <alternativeName>
        <fullName evidence="2">2-phospho-D-glycerate hydro-lyase</fullName>
    </alternativeName>
    <alternativeName>
        <fullName evidence="2">2-phosphoglycerate dehydratase</fullName>
    </alternativeName>
    <alternativeName>
        <fullName evidence="9">Alpha-enolase</fullName>
        <shortName evidence="9">Eno</shortName>
    </alternativeName>
</protein>
<evidence type="ECO:0000250" key="1">
    <source>
        <dbReference type="UniProtKB" id="A0A0H3GN27"/>
    </source>
</evidence>
<evidence type="ECO:0000255" key="2">
    <source>
        <dbReference type="HAMAP-Rule" id="MF_00318"/>
    </source>
</evidence>
<evidence type="ECO:0000269" key="3">
    <source>
    </source>
</evidence>
<evidence type="ECO:0000269" key="4">
    <source>
    </source>
</evidence>
<evidence type="ECO:0000269" key="5">
    <source>
    </source>
</evidence>
<evidence type="ECO:0000269" key="6">
    <source>
    </source>
</evidence>
<evidence type="ECO:0000269" key="7">
    <source>
    </source>
</evidence>
<evidence type="ECO:0000269" key="8">
    <source>
    </source>
</evidence>
<evidence type="ECO:0000303" key="9">
    <source>
    </source>
</evidence>
<evidence type="ECO:0000303" key="10">
    <source>
    </source>
</evidence>
<evidence type="ECO:0000305" key="11"/>
<evidence type="ECO:0000305" key="12">
    <source>
    </source>
</evidence>
<evidence type="ECO:0007744" key="13">
    <source>
        <dbReference type="PDB" id="1W6T"/>
    </source>
</evidence>
<evidence type="ECO:0007829" key="14">
    <source>
        <dbReference type="PDB" id="1W6T"/>
    </source>
</evidence>
<comment type="function">
    <text evidence="2 3 4">Catalyzes the reversible conversion of 2-phosphoglycerate (2-PG) into phosphoenolpyruvate (PEP) (PubMed:11442827, PubMed:12435062). It is essential for the degradation of carbohydrates via glycolysis.</text>
</comment>
<comment type="function">
    <text evidence="3 4 5 7 8">'Moonlights' as a plasminogen receptor. Binds host (human) plasminogen when expressed at the bacterial cell surface, potentially allowing the bacterium to acquire surface-associated proteolytic activity, which in turn contributes to the degradation of the extracellular matrix and transmigration of the bacteria (PubMed:11442827, PubMed:12435062, PubMed:16113819). Also binds plasmin, about 10-fold less well than plasminogen (PubMed:11442827). A short internal peptide (FYDKERKVYD, residues 248-257) partially inhibits plasminogen binding to unencapsulated strain R6x (PubMed:12828639). Plasminogen bound on host pneumonocytes, epithelium and endothelium promotes bacterial binding, probably in part via enolase (PubMed:23906818).</text>
</comment>
<comment type="catalytic activity">
    <reaction evidence="2 3 4">
        <text>(2R)-2-phosphoglycerate = phosphoenolpyruvate + H2O</text>
        <dbReference type="Rhea" id="RHEA:10164"/>
        <dbReference type="ChEBI" id="CHEBI:15377"/>
        <dbReference type="ChEBI" id="CHEBI:58289"/>
        <dbReference type="ChEBI" id="CHEBI:58702"/>
        <dbReference type="EC" id="4.2.1.11"/>
    </reaction>
    <physiologicalReaction direction="left-to-right" evidence="3 4">
        <dbReference type="Rhea" id="RHEA:10165"/>
    </physiologicalReaction>
</comment>
<comment type="cofactor">
    <cofactor evidence="2 6">
        <name>Mg(2+)</name>
        <dbReference type="ChEBI" id="CHEBI:18420"/>
    </cofactor>
    <text evidence="2">Binds a second Mg(2+) ion via substrate during catalysis.</text>
</comment>
<comment type="biophysicochemical properties">
    <kinetics>
        <KM evidence="3">4.5 mM for 2-phospho-D-glycerate</KM>
        <Vmax evidence="3">2.792 umol/min/mg enzyme</Vmax>
        <text evidence="3">Also catalytically active when expressed on the bacterial cell surface.</text>
    </kinetics>
</comment>
<comment type="pathway">
    <text evidence="2">Carbohydrate degradation; glycolysis; pyruvate from D-glyceraldehyde 3-phosphate: step 4/5.</text>
</comment>
<comment type="subunit">
    <text evidence="6">Homooctamer formed by a tetramer of dimers (PubMed:15476816). Forms a ring-shaped structure (PubMed:15476816).</text>
</comment>
<comment type="interaction">
    <interactant intactId="EBI-2207206">
        <id>Q97QS2</id>
    </interactant>
    <interactant intactId="EBI-2207276">
        <id>Q9S400</id>
        <label>aroA</label>
    </interactant>
    <organismsDiffer>false</organismsDiffer>
    <experiments>2</experiments>
</comment>
<comment type="interaction">
    <interactant intactId="EBI-2207206">
        <id>Q97QS2</id>
    </interactant>
    <interactant intactId="EBI-2207302">
        <id>Q97PR0</id>
        <label>asnS</label>
    </interactant>
    <organismsDiffer>false</organismsDiffer>
    <experiments>2</experiments>
</comment>
<comment type="interaction">
    <interactant intactId="EBI-2207206">
        <id>Q97QS2</id>
    </interactant>
    <interactant intactId="EBI-2207079">
        <id>P95830</id>
        <label>dnaJ</label>
    </interactant>
    <organismsDiffer>false</organismsDiffer>
    <experiments>2</experiments>
</comment>
<comment type="interaction">
    <interactant intactId="EBI-2207206">
        <id>Q97QS2</id>
    </interactant>
    <interactant intactId="EBI-2207039">
        <id>Q97SE6</id>
        <label>gatA</label>
    </interactant>
    <organismsDiffer>false</organismsDiffer>
    <experiments>2</experiments>
</comment>
<comment type="interaction">
    <interactant intactId="EBI-2207206">
        <id>Q97QS2</id>
    </interactant>
    <interactant intactId="EBI-2207023">
        <id>Q97SE7</id>
        <label>gatB</label>
    </interactant>
    <organismsDiffer>false</organismsDiffer>
    <experiments>2</experiments>
</comment>
<comment type="interaction">
    <interactant intactId="EBI-2207206">
        <id>Q97QS2</id>
    </interactant>
    <interactant intactId="EBI-2207053">
        <id>Q97SE5</id>
        <label>gatC</label>
    </interactant>
    <organismsDiffer>false</organismsDiffer>
    <experiments>2</experiments>
</comment>
<comment type="interaction">
    <interactant intactId="EBI-2207206">
        <id>Q97QS2</id>
    </interactant>
    <interactant intactId="EBI-2207733">
        <id>Q97NG1</id>
        <label>gltX</label>
    </interactant>
    <organismsDiffer>false</organismsDiffer>
    <experiments>2</experiments>
</comment>
<comment type="interaction">
    <interactant intactId="EBI-2207206">
        <id>Q97QS2</id>
    </interactant>
    <interactant intactId="EBI-2206949">
        <id>Q97NV3</id>
        <label>groES</label>
    </interactant>
    <organismsDiffer>false</organismsDiffer>
    <experiments>2</experiments>
</comment>
<comment type="interaction">
    <interactant intactId="EBI-2207206">
        <id>Q97QS2</id>
    </interactant>
    <interactant intactId="EBI-2207065">
        <id>Q97S73</id>
        <label>grpE</label>
    </interactant>
    <organismsDiffer>false</organismsDiffer>
    <experiments>2</experiments>
</comment>
<comment type="interaction">
    <interactant intactId="EBI-2207206">
        <id>Q97QS2</id>
    </interactant>
    <interactant intactId="EBI-2207121">
        <id>Q97RS9</id>
        <label>lysS</label>
    </interactant>
    <organismsDiffer>false</organismsDiffer>
    <experiments>3</experiments>
</comment>
<comment type="interaction">
    <interactant intactId="EBI-2207206">
        <id>Q97QS2</id>
    </interactant>
    <interactant intactId="EBI-2206955">
        <id>P65887</id>
        <label>purA</label>
    </interactant>
    <organismsDiffer>false</organismsDiffer>
    <experiments>2</experiments>
</comment>
<comment type="interaction">
    <interactant intactId="EBI-2207206">
        <id>Q97QS2</id>
    </interactant>
    <interactant intactId="EBI-2207248">
        <id>P65946</id>
        <label>pyrR</label>
    </interactant>
    <organismsDiffer>false</organismsDiffer>
    <experiments>2</experiments>
</comment>
<comment type="interaction">
    <interactant intactId="EBI-2207206">
        <id>Q97QS2</id>
    </interactant>
    <interactant intactId="EBI-2206983">
        <id>Q97SR4</id>
        <label>uppS</label>
    </interactant>
    <organismsDiffer>false</organismsDiffer>
    <experiments>2</experiments>
</comment>
<comment type="interaction">
    <interactant intactId="EBI-2207206">
        <id>Q97QS2</id>
    </interactant>
    <interactant intactId="EBI-2207218">
        <id>Q97QP2</id>
        <label>xerS</label>
    </interactant>
    <organismsDiffer>false</organismsDiffer>
    <experiments>2</experiments>
</comment>
<comment type="subcellular location">
    <subcellularLocation>
        <location evidence="2 3 4">Cytoplasm</location>
    </subcellularLocation>
    <subcellularLocation>
        <location evidence="2 12">Secreted</location>
    </subcellularLocation>
    <subcellularLocation>
        <location evidence="2 3 4">Cell surface</location>
    </subcellularLocation>
    <subcellularLocation>
        <location evidence="3">Secreted</location>
        <location evidence="3">Capsule</location>
    </subcellularLocation>
    <subcellularLocation>
        <location evidence="3">Secreted</location>
        <location evidence="3">Cell wall</location>
    </subcellularLocation>
    <text evidence="1 3 4">Fractions of enolase are present in both the cytoplasm and on the cell surface; in encapsulated strains it is on the exterior of the capsule (ATCC 11733), in unencapsulated strains it is on the cell wall (R6x) (PubMed:11442827, PubMed:12435062). Extraneously added enolase binds to bacterial cells (PubMed:11442827). The export of enolase might depend on secA2 (By similarity). Once secreted, it remains attached to the cell surface, probably in complex with plasminogen (PubMed:11442827, PubMed:12435062). Detected by antisera of human patients infected with pneumococcal disease (PubMed:12435062).</text>
</comment>
<comment type="disruption phenotype">
    <text evidence="3">Essential, it cannot be deleted (PubMed:11442827).</text>
</comment>
<comment type="similarity">
    <text evidence="2">Belongs to the enolase family.</text>
</comment>
<dbReference type="EC" id="4.2.1.11" evidence="2 3 4"/>
<dbReference type="EMBL" id="AE005672">
    <property type="protein sequence ID" value="AAK75238.1"/>
    <property type="molecule type" value="Genomic_DNA"/>
</dbReference>
<dbReference type="PIR" id="E95130">
    <property type="entry name" value="E95130"/>
</dbReference>
<dbReference type="RefSeq" id="WP_000022813.1">
    <property type="nucleotide sequence ID" value="NZ_CP155539.1"/>
</dbReference>
<dbReference type="PDB" id="1W6T">
    <property type="method" value="X-ray"/>
    <property type="resolution" value="2.10 A"/>
    <property type="chains" value="A/B=1-434"/>
</dbReference>
<dbReference type="PDBsum" id="1W6T"/>
<dbReference type="SMR" id="Q97QS2"/>
<dbReference type="IntAct" id="Q97QS2">
    <property type="interactions" value="14"/>
</dbReference>
<dbReference type="MoonProt" id="Q97QS2"/>
<dbReference type="PaxDb" id="170187-SP_1128"/>
<dbReference type="EnsemblBacteria" id="AAK75238">
    <property type="protein sequence ID" value="AAK75238"/>
    <property type="gene ID" value="SP_1128"/>
</dbReference>
<dbReference type="GeneID" id="93739591"/>
<dbReference type="KEGG" id="spn:SP_1128"/>
<dbReference type="eggNOG" id="COG0148">
    <property type="taxonomic scope" value="Bacteria"/>
</dbReference>
<dbReference type="PhylomeDB" id="Q97QS2"/>
<dbReference type="BioCyc" id="SPNE170187:G1FZB-1152-MONOMER"/>
<dbReference type="SABIO-RK" id="Q97QS2"/>
<dbReference type="UniPathway" id="UPA00109">
    <property type="reaction ID" value="UER00187"/>
</dbReference>
<dbReference type="EvolutionaryTrace" id="Q97QS2"/>
<dbReference type="Proteomes" id="UP000000585">
    <property type="component" value="Chromosome"/>
</dbReference>
<dbReference type="GO" id="GO:0042603">
    <property type="term" value="C:capsule"/>
    <property type="evidence" value="ECO:0007669"/>
    <property type="project" value="UniProtKB-SubCell"/>
</dbReference>
<dbReference type="GO" id="GO:0009986">
    <property type="term" value="C:cell surface"/>
    <property type="evidence" value="ECO:0007669"/>
    <property type="project" value="UniProtKB-SubCell"/>
</dbReference>
<dbReference type="GO" id="GO:0005576">
    <property type="term" value="C:extracellular region"/>
    <property type="evidence" value="ECO:0007669"/>
    <property type="project" value="UniProtKB-SubCell"/>
</dbReference>
<dbReference type="GO" id="GO:0009274">
    <property type="term" value="C:peptidoglycan-based cell wall"/>
    <property type="evidence" value="ECO:0007669"/>
    <property type="project" value="UniProtKB-ARBA"/>
</dbReference>
<dbReference type="GO" id="GO:0000015">
    <property type="term" value="C:phosphopyruvate hydratase complex"/>
    <property type="evidence" value="ECO:0007669"/>
    <property type="project" value="InterPro"/>
</dbReference>
<dbReference type="GO" id="GO:0000287">
    <property type="term" value="F:magnesium ion binding"/>
    <property type="evidence" value="ECO:0007669"/>
    <property type="project" value="UniProtKB-UniRule"/>
</dbReference>
<dbReference type="GO" id="GO:0004634">
    <property type="term" value="F:phosphopyruvate hydratase activity"/>
    <property type="evidence" value="ECO:0007669"/>
    <property type="project" value="UniProtKB-UniRule"/>
</dbReference>
<dbReference type="GO" id="GO:0007155">
    <property type="term" value="P:cell adhesion"/>
    <property type="evidence" value="ECO:0007669"/>
    <property type="project" value="UniProtKB-KW"/>
</dbReference>
<dbReference type="GO" id="GO:0006096">
    <property type="term" value="P:glycolytic process"/>
    <property type="evidence" value="ECO:0007669"/>
    <property type="project" value="UniProtKB-UniRule"/>
</dbReference>
<dbReference type="CDD" id="cd03313">
    <property type="entry name" value="enolase"/>
    <property type="match status" value="1"/>
</dbReference>
<dbReference type="FunFam" id="3.20.20.120:FF:000001">
    <property type="entry name" value="Enolase"/>
    <property type="match status" value="1"/>
</dbReference>
<dbReference type="FunFam" id="3.30.390.10:FF:000001">
    <property type="entry name" value="Enolase"/>
    <property type="match status" value="1"/>
</dbReference>
<dbReference type="Gene3D" id="3.20.20.120">
    <property type="entry name" value="Enolase-like C-terminal domain"/>
    <property type="match status" value="1"/>
</dbReference>
<dbReference type="Gene3D" id="3.30.390.10">
    <property type="entry name" value="Enolase-like, N-terminal domain"/>
    <property type="match status" value="1"/>
</dbReference>
<dbReference type="HAMAP" id="MF_00318">
    <property type="entry name" value="Enolase"/>
    <property type="match status" value="1"/>
</dbReference>
<dbReference type="InterPro" id="IPR000941">
    <property type="entry name" value="Enolase"/>
</dbReference>
<dbReference type="InterPro" id="IPR036849">
    <property type="entry name" value="Enolase-like_C_sf"/>
</dbReference>
<dbReference type="InterPro" id="IPR029017">
    <property type="entry name" value="Enolase-like_N"/>
</dbReference>
<dbReference type="InterPro" id="IPR020810">
    <property type="entry name" value="Enolase_C"/>
</dbReference>
<dbReference type="InterPro" id="IPR020809">
    <property type="entry name" value="Enolase_CS"/>
</dbReference>
<dbReference type="InterPro" id="IPR020811">
    <property type="entry name" value="Enolase_N"/>
</dbReference>
<dbReference type="NCBIfam" id="TIGR01060">
    <property type="entry name" value="eno"/>
    <property type="match status" value="1"/>
</dbReference>
<dbReference type="PANTHER" id="PTHR11902">
    <property type="entry name" value="ENOLASE"/>
    <property type="match status" value="1"/>
</dbReference>
<dbReference type="PANTHER" id="PTHR11902:SF1">
    <property type="entry name" value="ENOLASE"/>
    <property type="match status" value="1"/>
</dbReference>
<dbReference type="Pfam" id="PF00113">
    <property type="entry name" value="Enolase_C"/>
    <property type="match status" value="1"/>
</dbReference>
<dbReference type="Pfam" id="PF03952">
    <property type="entry name" value="Enolase_N"/>
    <property type="match status" value="1"/>
</dbReference>
<dbReference type="PIRSF" id="PIRSF001400">
    <property type="entry name" value="Enolase"/>
    <property type="match status" value="1"/>
</dbReference>
<dbReference type="PRINTS" id="PR00148">
    <property type="entry name" value="ENOLASE"/>
</dbReference>
<dbReference type="SFLD" id="SFLDS00001">
    <property type="entry name" value="Enolase"/>
    <property type="match status" value="1"/>
</dbReference>
<dbReference type="SFLD" id="SFLDF00002">
    <property type="entry name" value="enolase"/>
    <property type="match status" value="1"/>
</dbReference>
<dbReference type="SMART" id="SM01192">
    <property type="entry name" value="Enolase_C"/>
    <property type="match status" value="1"/>
</dbReference>
<dbReference type="SMART" id="SM01193">
    <property type="entry name" value="Enolase_N"/>
    <property type="match status" value="1"/>
</dbReference>
<dbReference type="SUPFAM" id="SSF51604">
    <property type="entry name" value="Enolase C-terminal domain-like"/>
    <property type="match status" value="1"/>
</dbReference>
<dbReference type="SUPFAM" id="SSF54826">
    <property type="entry name" value="Enolase N-terminal domain-like"/>
    <property type="match status" value="1"/>
</dbReference>
<dbReference type="PROSITE" id="PS00164">
    <property type="entry name" value="ENOLASE"/>
    <property type="match status" value="1"/>
</dbReference>